<organism>
    <name type="scientific">Pseudomonas fluorescens (strain SBW25)</name>
    <dbReference type="NCBI Taxonomy" id="216595"/>
    <lineage>
        <taxon>Bacteria</taxon>
        <taxon>Pseudomonadati</taxon>
        <taxon>Pseudomonadota</taxon>
        <taxon>Gammaproteobacteria</taxon>
        <taxon>Pseudomonadales</taxon>
        <taxon>Pseudomonadaceae</taxon>
        <taxon>Pseudomonas</taxon>
    </lineage>
</organism>
<feature type="chain" id="PRO_1000214580" description="Large ribosomal subunit protein uL4">
    <location>
        <begin position="1"/>
        <end position="200"/>
    </location>
</feature>
<feature type="region of interest" description="Disordered" evidence="2">
    <location>
        <begin position="38"/>
        <end position="68"/>
    </location>
</feature>
<feature type="compositionally biased region" description="Basic residues" evidence="2">
    <location>
        <begin position="54"/>
        <end position="65"/>
    </location>
</feature>
<name>RL4_PSEFS</name>
<dbReference type="EMBL" id="AM181176">
    <property type="protein sequence ID" value="CAY52765.1"/>
    <property type="molecule type" value="Genomic_DNA"/>
</dbReference>
<dbReference type="RefSeq" id="WP_003176424.1">
    <property type="nucleotide sequence ID" value="NC_012660.1"/>
</dbReference>
<dbReference type="SMR" id="C3K2X5"/>
<dbReference type="STRING" id="294.SRM1_05178"/>
<dbReference type="GeneID" id="97919463"/>
<dbReference type="eggNOG" id="COG0088">
    <property type="taxonomic scope" value="Bacteria"/>
</dbReference>
<dbReference type="HOGENOM" id="CLU_041575_5_2_6"/>
<dbReference type="OrthoDB" id="9803201at2"/>
<dbReference type="GO" id="GO:1990904">
    <property type="term" value="C:ribonucleoprotein complex"/>
    <property type="evidence" value="ECO:0007669"/>
    <property type="project" value="UniProtKB-KW"/>
</dbReference>
<dbReference type="GO" id="GO:0005840">
    <property type="term" value="C:ribosome"/>
    <property type="evidence" value="ECO:0007669"/>
    <property type="project" value="UniProtKB-KW"/>
</dbReference>
<dbReference type="GO" id="GO:0019843">
    <property type="term" value="F:rRNA binding"/>
    <property type="evidence" value="ECO:0007669"/>
    <property type="project" value="UniProtKB-UniRule"/>
</dbReference>
<dbReference type="GO" id="GO:0003735">
    <property type="term" value="F:structural constituent of ribosome"/>
    <property type="evidence" value="ECO:0007669"/>
    <property type="project" value="InterPro"/>
</dbReference>
<dbReference type="GO" id="GO:0006412">
    <property type="term" value="P:translation"/>
    <property type="evidence" value="ECO:0007669"/>
    <property type="project" value="UniProtKB-UniRule"/>
</dbReference>
<dbReference type="FunFam" id="3.40.1370.10:FF:000001">
    <property type="entry name" value="50S ribosomal protein L4"/>
    <property type="match status" value="1"/>
</dbReference>
<dbReference type="Gene3D" id="3.40.1370.10">
    <property type="match status" value="1"/>
</dbReference>
<dbReference type="HAMAP" id="MF_01328_B">
    <property type="entry name" value="Ribosomal_uL4_B"/>
    <property type="match status" value="1"/>
</dbReference>
<dbReference type="InterPro" id="IPR002136">
    <property type="entry name" value="Ribosomal_uL4"/>
</dbReference>
<dbReference type="InterPro" id="IPR013005">
    <property type="entry name" value="Ribosomal_uL4-like"/>
</dbReference>
<dbReference type="InterPro" id="IPR023574">
    <property type="entry name" value="Ribosomal_uL4_dom_sf"/>
</dbReference>
<dbReference type="NCBIfam" id="TIGR03953">
    <property type="entry name" value="rplD_bact"/>
    <property type="match status" value="1"/>
</dbReference>
<dbReference type="PANTHER" id="PTHR10746">
    <property type="entry name" value="50S RIBOSOMAL PROTEIN L4"/>
    <property type="match status" value="1"/>
</dbReference>
<dbReference type="PANTHER" id="PTHR10746:SF6">
    <property type="entry name" value="LARGE RIBOSOMAL SUBUNIT PROTEIN UL4M"/>
    <property type="match status" value="1"/>
</dbReference>
<dbReference type="Pfam" id="PF00573">
    <property type="entry name" value="Ribosomal_L4"/>
    <property type="match status" value="1"/>
</dbReference>
<dbReference type="SUPFAM" id="SSF52166">
    <property type="entry name" value="Ribosomal protein L4"/>
    <property type="match status" value="1"/>
</dbReference>
<reference key="1">
    <citation type="journal article" date="2009" name="Genome Biol.">
        <title>Genomic and genetic analyses of diversity and plant interactions of Pseudomonas fluorescens.</title>
        <authorList>
            <person name="Silby M.W."/>
            <person name="Cerdeno-Tarraga A.M."/>
            <person name="Vernikos G.S."/>
            <person name="Giddens S.R."/>
            <person name="Jackson R.W."/>
            <person name="Preston G.M."/>
            <person name="Zhang X.-X."/>
            <person name="Moon C.D."/>
            <person name="Gehrig S.M."/>
            <person name="Godfrey S.A.C."/>
            <person name="Knight C.G."/>
            <person name="Malone J.G."/>
            <person name="Robinson Z."/>
            <person name="Spiers A.J."/>
            <person name="Harris S."/>
            <person name="Challis G.L."/>
            <person name="Yaxley A.M."/>
            <person name="Harris D."/>
            <person name="Seeger K."/>
            <person name="Murphy L."/>
            <person name="Rutter S."/>
            <person name="Squares R."/>
            <person name="Quail M.A."/>
            <person name="Saunders E."/>
            <person name="Mavromatis K."/>
            <person name="Brettin T.S."/>
            <person name="Bentley S.D."/>
            <person name="Hothersall J."/>
            <person name="Stephens E."/>
            <person name="Thomas C.M."/>
            <person name="Parkhill J."/>
            <person name="Levy S.B."/>
            <person name="Rainey P.B."/>
            <person name="Thomson N.R."/>
        </authorList>
    </citation>
    <scope>NUCLEOTIDE SEQUENCE [LARGE SCALE GENOMIC DNA]</scope>
    <source>
        <strain>SBW25</strain>
    </source>
</reference>
<evidence type="ECO:0000255" key="1">
    <source>
        <dbReference type="HAMAP-Rule" id="MF_01328"/>
    </source>
</evidence>
<evidence type="ECO:0000256" key="2">
    <source>
        <dbReference type="SAM" id="MobiDB-lite"/>
    </source>
</evidence>
<evidence type="ECO:0000305" key="3"/>
<gene>
    <name evidence="1" type="primary">rplD</name>
    <name type="ordered locus">PFLU_5526</name>
</gene>
<sequence>MQLNVNDAQAIEVSELTFGGEFNETLVHQAVVAYMAGGRQGSKQQKTRSDVRGGGKRPWRQKGTGRARAGTIRSPIWRGGGTTFAARPQDHSQKLNKKMYRAALRSILAELVRTDRLVVVQDFAVESPKTKDLLGKLNNMSLTDVLIVSEAVDQNLYLAARNLPHVDVRDVQGSDPVSLIAYDKVLITVSAVKKFEELLG</sequence>
<accession>C3K2X5</accession>
<protein>
    <recommendedName>
        <fullName evidence="1">Large ribosomal subunit protein uL4</fullName>
    </recommendedName>
    <alternativeName>
        <fullName evidence="3">50S ribosomal protein L4</fullName>
    </alternativeName>
</protein>
<comment type="function">
    <text evidence="1">One of the primary rRNA binding proteins, this protein initially binds near the 5'-end of the 23S rRNA. It is important during the early stages of 50S assembly. It makes multiple contacts with different domains of the 23S rRNA in the assembled 50S subunit and ribosome.</text>
</comment>
<comment type="function">
    <text evidence="1">Forms part of the polypeptide exit tunnel.</text>
</comment>
<comment type="subunit">
    <text evidence="1">Part of the 50S ribosomal subunit.</text>
</comment>
<comment type="similarity">
    <text evidence="1">Belongs to the universal ribosomal protein uL4 family.</text>
</comment>
<proteinExistence type="inferred from homology"/>
<keyword id="KW-0687">Ribonucleoprotein</keyword>
<keyword id="KW-0689">Ribosomal protein</keyword>
<keyword id="KW-0694">RNA-binding</keyword>
<keyword id="KW-0699">rRNA-binding</keyword>